<organism>
    <name type="scientific">Thermoanaerobacter pseudethanolicus (strain ATCC 33223 / 39E)</name>
    <name type="common">Clostridium thermohydrosulfuricum</name>
    <dbReference type="NCBI Taxonomy" id="340099"/>
    <lineage>
        <taxon>Bacteria</taxon>
        <taxon>Bacillati</taxon>
        <taxon>Bacillota</taxon>
        <taxon>Clostridia</taxon>
        <taxon>Thermoanaerobacterales</taxon>
        <taxon>Thermoanaerobacteraceae</taxon>
        <taxon>Thermoanaerobacter</taxon>
    </lineage>
</organism>
<reference key="1">
    <citation type="submission" date="2008-01" db="EMBL/GenBank/DDBJ databases">
        <title>Complete sequence of Thermoanaerobacter pseudethanolicus 39E.</title>
        <authorList>
            <person name="Copeland A."/>
            <person name="Lucas S."/>
            <person name="Lapidus A."/>
            <person name="Barry K."/>
            <person name="Glavina del Rio T."/>
            <person name="Dalin E."/>
            <person name="Tice H."/>
            <person name="Pitluck S."/>
            <person name="Bruce D."/>
            <person name="Goodwin L."/>
            <person name="Saunders E."/>
            <person name="Brettin T."/>
            <person name="Detter J.C."/>
            <person name="Han C."/>
            <person name="Schmutz J."/>
            <person name="Larimer F."/>
            <person name="Land M."/>
            <person name="Hauser L."/>
            <person name="Kyrpides N."/>
            <person name="Lykidis A."/>
            <person name="Hemme C."/>
            <person name="Fields M.W."/>
            <person name="He Z."/>
            <person name="Zhou J."/>
            <person name="Richardson P."/>
        </authorList>
    </citation>
    <scope>NUCLEOTIDE SEQUENCE [LARGE SCALE GENOMIC DNA]</scope>
    <source>
        <strain>ATCC 33223 / DSM 2355 / 39E</strain>
    </source>
</reference>
<sequence>MKSDIEIAQEAKMLHIREVAKKLDIEEDYLEYYGKYKAKISPALSEKIKDRKDGKLILVTAITPTPAGEGKTTLTVGLGQALAKIGKKAMIALREPSLGPCMGIKGGAAGGGYSQVVPMEDINLHFTGDLHAITAAHNLLAAMIDNHIHHGNELNIDIRAITWKRAMDMNDRALREIIVGLGGKANGFPRQDGFIITVASEVMAILCLAQDLMDLKRRIGDIIVAYDKDGNPVTARDLKADGAMTVLLKDAIKPNLVQTIENVPAFVHGGPFANIAHGCNSLIATKYGLKLADYLVTEAGFGADLGAEKFFDIKSRFGGLTPNAAVIVATVKALKMHGGVKKEHLQKEDVEAVRRGIENLEKQVENVRKFGVPVVVALNRFVFDTEREIEEVRKACEEMGVDMAVAEVWEKGGEGGIELAEKVVKACETPSNFHVLYDETLPIKDKLHIIATEIYGADGVEYTASALKDIANLERLGFDKMPIVVAKTQYSLSDDPKLLGRPRGFKITVRELRVSRGAGFIVALTGDIMTMPGLPKHPAAENIDIDENGRITGLF</sequence>
<keyword id="KW-0067">ATP-binding</keyword>
<keyword id="KW-0436">Ligase</keyword>
<keyword id="KW-0547">Nucleotide-binding</keyword>
<keyword id="KW-0554">One-carbon metabolism</keyword>
<keyword id="KW-1185">Reference proteome</keyword>
<evidence type="ECO:0000255" key="1">
    <source>
        <dbReference type="HAMAP-Rule" id="MF_01543"/>
    </source>
</evidence>
<feature type="chain" id="PRO_1000146706" description="Formate--tetrahydrofolate ligase">
    <location>
        <begin position="1"/>
        <end position="555"/>
    </location>
</feature>
<feature type="binding site" evidence="1">
    <location>
        <begin position="65"/>
        <end position="72"/>
    </location>
    <ligand>
        <name>ATP</name>
        <dbReference type="ChEBI" id="CHEBI:30616"/>
    </ligand>
</feature>
<proteinExistence type="inferred from homology"/>
<gene>
    <name evidence="1" type="primary">fhs</name>
    <name type="ordered locus">Teth39_0303</name>
</gene>
<name>FTHS_THEP3</name>
<dbReference type="EC" id="6.3.4.3" evidence="1"/>
<dbReference type="EMBL" id="CP000924">
    <property type="protein sequence ID" value="ABY93972.1"/>
    <property type="molecule type" value="Genomic_DNA"/>
</dbReference>
<dbReference type="RefSeq" id="WP_012268968.1">
    <property type="nucleotide sequence ID" value="NC_010321.1"/>
</dbReference>
<dbReference type="SMR" id="B0KC36"/>
<dbReference type="STRING" id="340099.Teth39_0303"/>
<dbReference type="KEGG" id="tpd:Teth39_0303"/>
<dbReference type="eggNOG" id="COG2759">
    <property type="taxonomic scope" value="Bacteria"/>
</dbReference>
<dbReference type="HOGENOM" id="CLU_003601_3_3_9"/>
<dbReference type="UniPathway" id="UPA00193"/>
<dbReference type="Proteomes" id="UP000002156">
    <property type="component" value="Chromosome"/>
</dbReference>
<dbReference type="GO" id="GO:0005524">
    <property type="term" value="F:ATP binding"/>
    <property type="evidence" value="ECO:0007669"/>
    <property type="project" value="UniProtKB-UniRule"/>
</dbReference>
<dbReference type="GO" id="GO:0004329">
    <property type="term" value="F:formate-tetrahydrofolate ligase activity"/>
    <property type="evidence" value="ECO:0007669"/>
    <property type="project" value="UniProtKB-UniRule"/>
</dbReference>
<dbReference type="GO" id="GO:0035999">
    <property type="term" value="P:tetrahydrofolate interconversion"/>
    <property type="evidence" value="ECO:0007669"/>
    <property type="project" value="UniProtKB-UniRule"/>
</dbReference>
<dbReference type="CDD" id="cd00477">
    <property type="entry name" value="FTHFS"/>
    <property type="match status" value="1"/>
</dbReference>
<dbReference type="FunFam" id="3.30.1510.10:FF:000001">
    <property type="entry name" value="Formate--tetrahydrofolate ligase"/>
    <property type="match status" value="1"/>
</dbReference>
<dbReference type="FunFam" id="3.10.410.10:FF:000001">
    <property type="entry name" value="Putative formate--tetrahydrofolate ligase"/>
    <property type="match status" value="1"/>
</dbReference>
<dbReference type="Gene3D" id="3.30.1510.10">
    <property type="entry name" value="Domain 2, N(10)-formyltetrahydrofolate synthetase"/>
    <property type="match status" value="1"/>
</dbReference>
<dbReference type="Gene3D" id="3.10.410.10">
    <property type="entry name" value="Formyltetrahydrofolate synthetase, domain 3"/>
    <property type="match status" value="1"/>
</dbReference>
<dbReference type="Gene3D" id="3.40.50.300">
    <property type="entry name" value="P-loop containing nucleotide triphosphate hydrolases"/>
    <property type="match status" value="1"/>
</dbReference>
<dbReference type="HAMAP" id="MF_01543">
    <property type="entry name" value="FTHFS"/>
    <property type="match status" value="1"/>
</dbReference>
<dbReference type="InterPro" id="IPR000559">
    <property type="entry name" value="Formate_THF_ligase"/>
</dbReference>
<dbReference type="InterPro" id="IPR020628">
    <property type="entry name" value="Formate_THF_ligase_CS"/>
</dbReference>
<dbReference type="InterPro" id="IPR027417">
    <property type="entry name" value="P-loop_NTPase"/>
</dbReference>
<dbReference type="NCBIfam" id="NF010030">
    <property type="entry name" value="PRK13505.1"/>
    <property type="match status" value="1"/>
</dbReference>
<dbReference type="Pfam" id="PF01268">
    <property type="entry name" value="FTHFS"/>
    <property type="match status" value="1"/>
</dbReference>
<dbReference type="SUPFAM" id="SSF52540">
    <property type="entry name" value="P-loop containing nucleoside triphosphate hydrolases"/>
    <property type="match status" value="1"/>
</dbReference>
<dbReference type="PROSITE" id="PS00721">
    <property type="entry name" value="FTHFS_1"/>
    <property type="match status" value="1"/>
</dbReference>
<protein>
    <recommendedName>
        <fullName evidence="1">Formate--tetrahydrofolate ligase</fullName>
        <ecNumber evidence="1">6.3.4.3</ecNumber>
    </recommendedName>
    <alternativeName>
        <fullName evidence="1">Formyltetrahydrofolate synthetase</fullName>
        <shortName evidence="1">FHS</shortName>
        <shortName evidence="1">FTHFS</shortName>
    </alternativeName>
</protein>
<accession>B0KC36</accession>
<comment type="catalytic activity">
    <reaction evidence="1">
        <text>(6S)-5,6,7,8-tetrahydrofolate + formate + ATP = (6R)-10-formyltetrahydrofolate + ADP + phosphate</text>
        <dbReference type="Rhea" id="RHEA:20221"/>
        <dbReference type="ChEBI" id="CHEBI:15740"/>
        <dbReference type="ChEBI" id="CHEBI:30616"/>
        <dbReference type="ChEBI" id="CHEBI:43474"/>
        <dbReference type="ChEBI" id="CHEBI:57453"/>
        <dbReference type="ChEBI" id="CHEBI:195366"/>
        <dbReference type="ChEBI" id="CHEBI:456216"/>
        <dbReference type="EC" id="6.3.4.3"/>
    </reaction>
</comment>
<comment type="pathway">
    <text evidence="1">One-carbon metabolism; tetrahydrofolate interconversion.</text>
</comment>
<comment type="similarity">
    <text evidence="1">Belongs to the formate--tetrahydrofolate ligase family.</text>
</comment>